<reference key="1">
    <citation type="journal article" date="1992" name="Virology">
        <title>The DNA sequence of equine herpesvirus-1.</title>
        <authorList>
            <person name="Telford E.A.R."/>
            <person name="Watson M.S."/>
            <person name="McBride K."/>
            <person name="Davison A.J."/>
        </authorList>
    </citation>
    <scope>NUCLEOTIDE SEQUENCE [LARGE SCALE GENOMIC DNA]</scope>
</reference>
<feature type="chain" id="PRO_0000115847" description="DNA replication helicase">
    <location>
        <begin position="1"/>
        <end position="881"/>
    </location>
</feature>
<feature type="region of interest" description="Disordered" evidence="2">
    <location>
        <begin position="1"/>
        <end position="32"/>
    </location>
</feature>
<feature type="compositionally biased region" description="Basic and acidic residues" evidence="2">
    <location>
        <begin position="13"/>
        <end position="32"/>
    </location>
</feature>
<feature type="binding site" evidence="1">
    <location>
        <begin position="105"/>
        <end position="112"/>
    </location>
    <ligand>
        <name>ATP</name>
        <dbReference type="ChEBI" id="CHEBI:30616"/>
    </ligand>
</feature>
<accession>P28934</accession>
<accession>Q6DLF4</accession>
<comment type="function">
    <text evidence="1">Component of the helicase/primase complex. Unwinds the DNA at the replication forks and generates single-stranded DNA for both leading and lagging strand synthesis. The primase synthesizes short RNA primers on the lagging strand that the polymerase elongates using dNTPs. Possesses helicase-like motifs and therefore may act as the helicase subunit of the complex.</text>
</comment>
<comment type="subunit">
    <text evidence="1">Associates with the primase and the primase-associated factor to form the helicase-primase complex.</text>
</comment>
<comment type="subcellular location">
    <subcellularLocation>
        <location evidence="1">Host nucleus</location>
    </subcellularLocation>
</comment>
<comment type="similarity">
    <text evidence="1">Belongs to the herpesviridae helicase family.</text>
</comment>
<gene>
    <name evidence="1" type="primary">HELI</name>
    <name type="ordered locus">57</name>
</gene>
<keyword id="KW-0067">ATP-binding</keyword>
<keyword id="KW-0235">DNA replication</keyword>
<keyword id="KW-0347">Helicase</keyword>
<keyword id="KW-1048">Host nucleus</keyword>
<keyword id="KW-0378">Hydrolase</keyword>
<keyword id="KW-0547">Nucleotide-binding</keyword>
<keyword id="KW-1185">Reference proteome</keyword>
<organismHost>
    <name type="scientific">Equus caballus</name>
    <name type="common">Horse</name>
    <dbReference type="NCBI Taxonomy" id="9796"/>
</organismHost>
<protein>
    <recommendedName>
        <fullName evidence="1">DNA replication helicase</fullName>
        <ecNumber evidence="1">3.6.4.-</ecNumber>
    </recommendedName>
</protein>
<dbReference type="EC" id="3.6.4.-" evidence="1"/>
<dbReference type="EMBL" id="AY665713">
    <property type="protein sequence ID" value="AAT67314.1"/>
    <property type="molecule type" value="Genomic_DNA"/>
</dbReference>
<dbReference type="PIR" id="C36801">
    <property type="entry name" value="WZBEE9"/>
</dbReference>
<dbReference type="KEGG" id="vg:2948565"/>
<dbReference type="Proteomes" id="UP000001189">
    <property type="component" value="Segment"/>
</dbReference>
<dbReference type="GO" id="GO:0042025">
    <property type="term" value="C:host cell nucleus"/>
    <property type="evidence" value="ECO:0007669"/>
    <property type="project" value="UniProtKB-SubCell"/>
</dbReference>
<dbReference type="GO" id="GO:0005524">
    <property type="term" value="F:ATP binding"/>
    <property type="evidence" value="ECO:0007669"/>
    <property type="project" value="UniProtKB-KW"/>
</dbReference>
<dbReference type="GO" id="GO:0004386">
    <property type="term" value="F:helicase activity"/>
    <property type="evidence" value="ECO:0007669"/>
    <property type="project" value="UniProtKB-KW"/>
</dbReference>
<dbReference type="GO" id="GO:0016787">
    <property type="term" value="F:hydrolase activity"/>
    <property type="evidence" value="ECO:0007669"/>
    <property type="project" value="UniProtKB-KW"/>
</dbReference>
<dbReference type="GO" id="GO:0006260">
    <property type="term" value="P:DNA replication"/>
    <property type="evidence" value="ECO:0007669"/>
    <property type="project" value="UniProtKB-KW"/>
</dbReference>
<dbReference type="Gene3D" id="3.40.50.300">
    <property type="entry name" value="P-loop containing nucleotide triphosphate hydrolases"/>
    <property type="match status" value="1"/>
</dbReference>
<dbReference type="HAMAP" id="MF_04030">
    <property type="entry name" value="HSV_HELI"/>
    <property type="match status" value="1"/>
</dbReference>
<dbReference type="InterPro" id="IPR003840">
    <property type="entry name" value="DNA_helicase_dom"/>
</dbReference>
<dbReference type="InterPro" id="IPR034711">
    <property type="entry name" value="HSV_HELI"/>
</dbReference>
<dbReference type="InterPro" id="IPR027417">
    <property type="entry name" value="P-loop_NTPase"/>
</dbReference>
<dbReference type="Pfam" id="PF02689">
    <property type="entry name" value="Herpes_Helicase"/>
    <property type="match status" value="1"/>
</dbReference>
<dbReference type="SUPFAM" id="SSF52540">
    <property type="entry name" value="P-loop containing nucleoside triphosphate hydrolases"/>
    <property type="match status" value="2"/>
</dbReference>
<proteinExistence type="inferred from homology"/>
<organism>
    <name type="scientific">Equine herpesvirus 1 (strain Ab4p)</name>
    <name type="common">EHV-1</name>
    <name type="synonym">Equine abortion virus</name>
    <dbReference type="NCBI Taxonomy" id="31520"/>
    <lineage>
        <taxon>Viruses</taxon>
        <taxon>Duplodnaviria</taxon>
        <taxon>Heunggongvirae</taxon>
        <taxon>Peploviricota</taxon>
        <taxon>Herviviricetes</taxon>
        <taxon>Herpesvirales</taxon>
        <taxon>Orthoherpesviridae</taxon>
        <taxon>Alphaherpesvirinae</taxon>
        <taxon>Varicellovirus</taxon>
        <taxon>Varicellovirus equidalpha1</taxon>
        <taxon>Equid alphaherpesvirus 1</taxon>
    </lineage>
</organism>
<evidence type="ECO:0000255" key="1">
    <source>
        <dbReference type="HAMAP-Rule" id="MF_04030"/>
    </source>
</evidence>
<evidence type="ECO:0000256" key="2">
    <source>
        <dbReference type="SAM" id="MobiDB-lite"/>
    </source>
</evidence>
<name>HELI_EHV1B</name>
<sequence length="881" mass="99453">MESADILPGSRGTVDRRCEGSEEKITPPRPVEDFNPQLFPNEVYLNFTSMHGIQPVVARIRELSRKTVSAAMVPPLEWFERLPRLETPLDIEPLHLPFSVYLISGNAGSGKSTCIQTLNETMDCVITGATRVAAQNVYTKLSSAFATRHINTIFQEFGFRGNHVQAQLGKYQYSCSSSPPPIEELQKRDIVYYWEVLVDITRRLFESTASRGEFENIRALERLLGRAPGSLTRLAFCTNGSLPAFTRTNIVIIDEAGLLGRHLLTVVVYCWWMLNAAYKSPQYAEGKVPVIVCVGSPTQTDSLESRFEHKNLKCHVRSSENVLTHIITNRTIREYVSLSTNWAIFINNKRCQEYEFGELMKVLEYGLPITEEHMRLVDTFVVPEAYINNPANLPGWTRLYSSHKEVSAYMAKLHAHLKVSGERQFVVFTLPAYTFVKTAAFDEYKKITQQPSLSLDKWLAANASRVSNYSQSRDQDAGKTQCEYYSEHGVVVARTDVTYVLNSQVSVTTRMRKFVFGFSGTFETFDAVLKDDAFIKTQGETSVEYAYRFLSTLLFSGMINFYNFLKRPGLDEGRVREAYRRMAALTAKLIPGASVLESACDNPSGAPLNFRGLTDPPGFTGGTTNDWDDDNDVVFAALNEGAIDMLYCNYEFVRPETTQEVYSQFLMLKTMFVGRYSIFMDLFGGDFESSPFDTFVDNISYKGCEIFVGSMRGGVSSIALQTDSYTLMGYTSAPVYPFVEELARRKLHEGIAELFGAMNMPRMVLRDQHGFMSVLNVNLSEFVESVDDVELDMATAVDYGLSSKLAMTIARSQGLSLDKVAICFPRNNLRINSVYVAMSRTVSSRFLRMNLNPLRERHERDTVISEHILAALRDRDVQIVY</sequence>